<protein>
    <recommendedName>
        <fullName>Basic phospholipase A2</fullName>
        <shortName>svPLA2</shortName>
        <ecNumber evidence="4">3.1.1.4</ecNumber>
    </recommendedName>
    <alternativeName>
        <fullName evidence="5 6">Myotoxin I</fullName>
    </alternativeName>
    <alternativeName>
        <fullName>Phosphatidylcholine 2-acylhydrolase</fullName>
    </alternativeName>
</protein>
<comment type="function">
    <text evidence="3 4">Snake venom phospholipase A2 (PLA2) that shows high myotoxic activities, induces mild edema, and shows cytolytic, and anti-coagulant activities, as well as intracerebral lethal effect (PubMed:10698689, PubMed:1524423). Does not induce lethality at a dose of 5 ug/g, when intravenously injected into mice (PubMed:1524423). PLA2 catalyzes the calcium-dependent hydrolysis of the 2-acyl groups in 3-sn-phosphoglycerides (PubMed:1524423).</text>
</comment>
<comment type="catalytic activity">
    <reaction evidence="4">
        <text>a 1,2-diacyl-sn-glycero-3-phosphocholine + H2O = a 1-acyl-sn-glycero-3-phosphocholine + a fatty acid + H(+)</text>
        <dbReference type="Rhea" id="RHEA:15801"/>
        <dbReference type="ChEBI" id="CHEBI:15377"/>
        <dbReference type="ChEBI" id="CHEBI:15378"/>
        <dbReference type="ChEBI" id="CHEBI:28868"/>
        <dbReference type="ChEBI" id="CHEBI:57643"/>
        <dbReference type="ChEBI" id="CHEBI:58168"/>
        <dbReference type="EC" id="3.1.1.4"/>
    </reaction>
</comment>
<comment type="cofactor">
    <cofactor evidence="4">
        <name>Ca(2+)</name>
        <dbReference type="ChEBI" id="CHEBI:29108"/>
    </cofactor>
    <text evidence="1">Binds 1 Ca(2+) ion per subunit.</text>
</comment>
<comment type="activity regulation">
    <text evidence="3">Is selectively inhibited by the gamma-phospholipase A2 inhibitor (PLI) CgMIP-I (AC P0DQP7) but not by the alpha-PLI CgMIP-II (AC P0DQP8).</text>
</comment>
<comment type="subcellular location">
    <subcellularLocation>
        <location evidence="3">Secreted</location>
    </subcellularLocation>
</comment>
<comment type="tissue specificity">
    <text evidence="8">Expressed by the venom gland.</text>
</comment>
<comment type="similarity">
    <text evidence="7">Belongs to the phospholipase A2 family. Group II subfamily. D49 sub-subfamily.</text>
</comment>
<dbReference type="EC" id="3.1.1.4" evidence="4"/>
<dbReference type="SMR" id="P0DQP6"/>
<dbReference type="GO" id="GO:0005576">
    <property type="term" value="C:extracellular region"/>
    <property type="evidence" value="ECO:0007669"/>
    <property type="project" value="UniProtKB-SubCell"/>
</dbReference>
<dbReference type="GO" id="GO:0005509">
    <property type="term" value="F:calcium ion binding"/>
    <property type="evidence" value="ECO:0007669"/>
    <property type="project" value="InterPro"/>
</dbReference>
<dbReference type="GO" id="GO:0004623">
    <property type="term" value="F:phospholipase A2 activity"/>
    <property type="evidence" value="ECO:0007669"/>
    <property type="project" value="UniProtKB-EC"/>
</dbReference>
<dbReference type="GO" id="GO:0090729">
    <property type="term" value="F:toxin activity"/>
    <property type="evidence" value="ECO:0007669"/>
    <property type="project" value="UniProtKB-KW"/>
</dbReference>
<dbReference type="GO" id="GO:0050482">
    <property type="term" value="P:arachidonate secretion"/>
    <property type="evidence" value="ECO:0007669"/>
    <property type="project" value="InterPro"/>
</dbReference>
<dbReference type="GO" id="GO:0016042">
    <property type="term" value="P:lipid catabolic process"/>
    <property type="evidence" value="ECO:0007669"/>
    <property type="project" value="UniProtKB-KW"/>
</dbReference>
<dbReference type="GO" id="GO:0006644">
    <property type="term" value="P:phospholipid metabolic process"/>
    <property type="evidence" value="ECO:0007669"/>
    <property type="project" value="InterPro"/>
</dbReference>
<dbReference type="Gene3D" id="1.20.90.10">
    <property type="entry name" value="Phospholipase A2 domain"/>
    <property type="match status" value="1"/>
</dbReference>
<dbReference type="InterPro" id="IPR001211">
    <property type="entry name" value="PLipase_A2"/>
</dbReference>
<dbReference type="InterPro" id="IPR016090">
    <property type="entry name" value="PLipase_A2_dom"/>
</dbReference>
<dbReference type="InterPro" id="IPR036444">
    <property type="entry name" value="PLipase_A2_dom_sf"/>
</dbReference>
<dbReference type="Pfam" id="PF00068">
    <property type="entry name" value="Phospholip_A2_1"/>
    <property type="match status" value="1"/>
</dbReference>
<dbReference type="PRINTS" id="PR00389">
    <property type="entry name" value="PHPHLIPASEA2"/>
</dbReference>
<dbReference type="SUPFAM" id="SSF48619">
    <property type="entry name" value="Phospholipase A2, PLA2"/>
    <property type="match status" value="1"/>
</dbReference>
<reference key="1">
    <citation type="journal article" date="2000" name="Biochem. J.">
        <title>Two phospholipase A2 inhibitors from the plasma of Cerrophidion (Bothrops) godmani which selectively inhibit two different group-II phospholipase A2 myotoxins from its own venom: isolation, molecular cloning and biological properties.</title>
        <authorList>
            <person name="Lizano S."/>
            <person name="Angulo Y."/>
            <person name="Lomonte B."/>
            <person name="Fox J.W."/>
            <person name="Lambeau G."/>
            <person name="Lazdunski M."/>
            <person name="Gutierrez J.M."/>
        </authorList>
    </citation>
    <scope>PROTEIN SEQUENCE</scope>
    <scope>FUNCTION</scope>
    <scope>SUBCELLULAR LOCATION</scope>
    <source>
        <tissue>Venom</tissue>
    </source>
</reference>
<reference key="2">
    <citation type="journal article" date="1992" name="Arch. Biochem. Biophys.">
        <title>Isolation and characterization of basic myotoxic phospholipases A2 from Bothrops godmani (Godman's pit viper) snake venom.</title>
        <authorList>
            <person name="Diaz C."/>
            <person name="Gutierrez J.M."/>
            <person name="Lomonte B."/>
        </authorList>
    </citation>
    <scope>AMINO-ACID COMPOSITION</scope>
    <scope>FUNCTION</scope>
    <scope>CATALYTIC ACTIVITY</scope>
    <source>
        <tissue>Venom</tissue>
    </source>
</reference>
<name>PA21_CERGO</name>
<keyword id="KW-0106">Calcium</keyword>
<keyword id="KW-0903">Direct protein sequencing</keyword>
<keyword id="KW-1015">Disulfide bond</keyword>
<keyword id="KW-0378">Hydrolase</keyword>
<keyword id="KW-0442">Lipid degradation</keyword>
<keyword id="KW-0443">Lipid metabolism</keyword>
<keyword id="KW-0479">Metal-binding</keyword>
<keyword id="KW-0959">Myotoxin</keyword>
<keyword id="KW-0964">Secreted</keyword>
<keyword id="KW-0800">Toxin</keyword>
<accession>P0DQP6</accession>
<sequence>HLFQFREMIKEMTGKEPVVSYAFYGCYCGKGGRGKPDAT</sequence>
<organism>
    <name type="scientific">Cerrophidion godmani</name>
    <name type="common">Porthidium godmani</name>
    <name type="synonym">Bothrops godmani</name>
    <dbReference type="NCBI Taxonomy" id="44722"/>
    <lineage>
        <taxon>Eukaryota</taxon>
        <taxon>Metazoa</taxon>
        <taxon>Chordata</taxon>
        <taxon>Craniata</taxon>
        <taxon>Vertebrata</taxon>
        <taxon>Euteleostomi</taxon>
        <taxon>Lepidosauria</taxon>
        <taxon>Squamata</taxon>
        <taxon>Bifurcata</taxon>
        <taxon>Unidentata</taxon>
        <taxon>Episquamata</taxon>
        <taxon>Toxicofera</taxon>
        <taxon>Serpentes</taxon>
        <taxon>Colubroidea</taxon>
        <taxon>Viperidae</taxon>
        <taxon>Crotalinae</taxon>
        <taxon>Cerrophidion</taxon>
    </lineage>
</organism>
<proteinExistence type="evidence at protein level"/>
<feature type="chain" id="PRO_0000452707" description="Basic phospholipase A2" evidence="3">
    <location>
        <begin position="1"/>
        <end position="39" status="greater than"/>
    </location>
</feature>
<feature type="binding site" evidence="2">
    <location>
        <position position="27"/>
    </location>
    <ligand>
        <name>Ca(2+)</name>
        <dbReference type="ChEBI" id="CHEBI:29108"/>
    </ligand>
</feature>
<feature type="binding site" evidence="2">
    <location>
        <position position="29"/>
    </location>
    <ligand>
        <name>Ca(2+)</name>
        <dbReference type="ChEBI" id="CHEBI:29108"/>
    </ligand>
</feature>
<feature type="binding site" evidence="2">
    <location>
        <position position="31"/>
    </location>
    <ligand>
        <name>Ca(2+)</name>
        <dbReference type="ChEBI" id="CHEBI:29108"/>
    </ligand>
</feature>
<feature type="disulfide bond" evidence="7">
    <location>
        <begin position="26"/>
        <end status="unknown"/>
    </location>
</feature>
<feature type="disulfide bond" evidence="7">
    <location>
        <begin position="28"/>
        <end status="unknown"/>
    </location>
</feature>
<feature type="non-terminal residue" evidence="7">
    <location>
        <position position="39"/>
    </location>
</feature>
<evidence type="ECO:0000250" key="1"/>
<evidence type="ECO:0000250" key="2">
    <source>
        <dbReference type="UniProtKB" id="O42187"/>
    </source>
</evidence>
<evidence type="ECO:0000269" key="3">
    <source>
    </source>
</evidence>
<evidence type="ECO:0000269" key="4">
    <source>
    </source>
</evidence>
<evidence type="ECO:0000303" key="5">
    <source>
    </source>
</evidence>
<evidence type="ECO:0000303" key="6">
    <source>
    </source>
</evidence>
<evidence type="ECO:0000305" key="7"/>
<evidence type="ECO:0000305" key="8">
    <source>
    </source>
</evidence>